<reference key="1">
    <citation type="journal article" date="1993" name="Mol. Microbiol.">
        <title>Organization of the genes necessary for hydrogenase expression in Rhodobacter capsulatus. Sequence analysis and identification of two hyp regulatory mutants.</title>
        <authorList>
            <person name="Colbeau A."/>
            <person name="Richaud P."/>
            <person name="Toussaint B."/>
            <person name="Caballero F.J."/>
            <person name="Elster C."/>
            <person name="Delphin C."/>
            <person name="Smith R.L."/>
            <person name="Chabert J."/>
            <person name="Vignais P.M."/>
        </authorList>
    </citation>
    <scope>NUCLEOTIDE SEQUENCE [GENOMIC DNA]</scope>
    <source>
        <strain>ATCC 33303 / B10</strain>
    </source>
</reference>
<protein>
    <recommendedName>
        <fullName evidence="1">Carbamoyl dehydratase HypE</fullName>
        <ecNumber evidence="1">4.2.1.-</ecNumber>
    </recommendedName>
    <alternativeName>
        <fullName evidence="1">Hydrogenase maturation factor HypE</fullName>
    </alternativeName>
</protein>
<gene>
    <name type="primary">hypE</name>
</gene>
<name>HYPE_RHOCA</name>
<evidence type="ECO:0000250" key="1">
    <source>
        <dbReference type="UniProtKB" id="P24193"/>
    </source>
</evidence>
<evidence type="ECO:0000305" key="2"/>
<dbReference type="EC" id="4.2.1.-" evidence="1"/>
<dbReference type="EMBL" id="X61007">
    <property type="protein sequence ID" value="CAA43329.1"/>
    <property type="status" value="ALT_INIT"/>
    <property type="molecule type" value="Genomic_DNA"/>
</dbReference>
<dbReference type="PIR" id="S32953">
    <property type="entry name" value="S32953"/>
</dbReference>
<dbReference type="RefSeq" id="WP_013066525.1">
    <property type="nucleotide sequence ID" value="NZ_JAOTPJ010000017.1"/>
</dbReference>
<dbReference type="SMR" id="P26412"/>
<dbReference type="GeneID" id="31489723"/>
<dbReference type="OMA" id="CGNGGKE"/>
<dbReference type="UniPathway" id="UPA00335"/>
<dbReference type="GO" id="GO:0016829">
    <property type="term" value="F:lyase activity"/>
    <property type="evidence" value="ECO:0007669"/>
    <property type="project" value="UniProtKB-KW"/>
</dbReference>
<dbReference type="GO" id="GO:0051604">
    <property type="term" value="P:protein maturation"/>
    <property type="evidence" value="ECO:0007669"/>
    <property type="project" value="TreeGrafter"/>
</dbReference>
<dbReference type="CDD" id="cd02197">
    <property type="entry name" value="HypE"/>
    <property type="match status" value="1"/>
</dbReference>
<dbReference type="Gene3D" id="3.90.650.10">
    <property type="entry name" value="PurM-like C-terminal domain"/>
    <property type="match status" value="1"/>
</dbReference>
<dbReference type="Gene3D" id="3.30.1330.10">
    <property type="entry name" value="PurM-like, N-terminal domain"/>
    <property type="match status" value="1"/>
</dbReference>
<dbReference type="InterPro" id="IPR011854">
    <property type="entry name" value="HypE"/>
</dbReference>
<dbReference type="InterPro" id="IPR010918">
    <property type="entry name" value="PurM-like_C_dom"/>
</dbReference>
<dbReference type="InterPro" id="IPR036676">
    <property type="entry name" value="PurM-like_C_sf"/>
</dbReference>
<dbReference type="InterPro" id="IPR016188">
    <property type="entry name" value="PurM-like_N"/>
</dbReference>
<dbReference type="InterPro" id="IPR036921">
    <property type="entry name" value="PurM-like_N_sf"/>
</dbReference>
<dbReference type="NCBIfam" id="TIGR02124">
    <property type="entry name" value="hypE"/>
    <property type="match status" value="1"/>
</dbReference>
<dbReference type="PANTHER" id="PTHR30303:SF0">
    <property type="entry name" value="CARBAMOYL DEHYDRATASE HYPE"/>
    <property type="match status" value="1"/>
</dbReference>
<dbReference type="PANTHER" id="PTHR30303">
    <property type="entry name" value="HYDROGENASE ISOENZYMES FORMATION PROTEIN HYPE"/>
    <property type="match status" value="1"/>
</dbReference>
<dbReference type="Pfam" id="PF00586">
    <property type="entry name" value="AIRS"/>
    <property type="match status" value="1"/>
</dbReference>
<dbReference type="Pfam" id="PF02769">
    <property type="entry name" value="AIRS_C"/>
    <property type="match status" value="1"/>
</dbReference>
<dbReference type="PIRSF" id="PIRSF005644">
    <property type="entry name" value="Hdrgns_mtr_HypE"/>
    <property type="match status" value="1"/>
</dbReference>
<dbReference type="SUPFAM" id="SSF56042">
    <property type="entry name" value="PurM C-terminal domain-like"/>
    <property type="match status" value="1"/>
</dbReference>
<dbReference type="SUPFAM" id="SSF55326">
    <property type="entry name" value="PurM N-terminal domain-like"/>
    <property type="match status" value="1"/>
</dbReference>
<proteinExistence type="inferred from homology"/>
<sequence>MALRDERVTLAHGGGGKAMRDLIEEVFTSVFQPPGMEDQARLTEAALAEPGARLAFTTDSYVVTPVEFPGGDIGKIAVCGTVNDLAVGGARPLWLSAAFILEEGTEVALLRRIVATMAREAEAAGVRIVTGDTKVVGRGACDGVFVTTSGVGVIPPGREMAAGRVRPGDVAIVNGVLGDHGATILAARGDLALTSDIESDCAALGHLMADVIAAAPGIRAARDLTRGGLASALNEIAQTAGCGLVIEETALPLRPEVVGLCEILGLDPLYLANEGRLVVFVPEAEAAAALAAMRARPEGAGACVVGRAVAEHAGQVRMRTAFGGARIVDMLVGEQLPRIC</sequence>
<organism>
    <name type="scientific">Rhodobacter capsulatus</name>
    <name type="common">Rhodopseudomonas capsulata</name>
    <dbReference type="NCBI Taxonomy" id="1061"/>
    <lineage>
        <taxon>Bacteria</taxon>
        <taxon>Pseudomonadati</taxon>
        <taxon>Pseudomonadota</taxon>
        <taxon>Alphaproteobacteria</taxon>
        <taxon>Rhodobacterales</taxon>
        <taxon>Rhodobacter group</taxon>
        <taxon>Rhodobacter</taxon>
    </lineage>
</organism>
<feature type="chain" id="PRO_0000201461" description="Carbamoyl dehydratase HypE">
    <location>
        <begin position="1"/>
        <end position="340"/>
    </location>
</feature>
<feature type="modified residue" description="S-carbamoylcysteine" evidence="1">
    <location>
        <position position="340"/>
    </location>
</feature>
<feature type="modified residue" description="S-cyanocysteine" evidence="1">
    <location>
        <position position="340"/>
    </location>
</feature>
<keyword id="KW-0456">Lyase</keyword>
<accession>P26412</accession>
<comment type="function">
    <text evidence="1">Involved in the maturation of [NiFe] hydrogenases. Along with HypF, it catalyzes the synthesis of the CN ligands of the active site iron of [NiFe]-hydrogenases. HypE catalyzes the ATP-dependent dehydration of the carboxamido group attached to its C-terminal cysteine to a cyano group.</text>
</comment>
<comment type="catalytic activity">
    <reaction evidence="1">
        <text>C-terminal S-carboxamide-L-cysteinyl-[HypE protein] + ATP = C-terminal S-cyanate-L-cysteinyl-[HypE protein] + ADP + phosphate + H(+)</text>
        <dbReference type="Rhea" id="RHEA:55644"/>
        <dbReference type="Rhea" id="RHEA-COMP:14247"/>
        <dbReference type="Rhea" id="RHEA-COMP:14248"/>
        <dbReference type="ChEBI" id="CHEBI:15378"/>
        <dbReference type="ChEBI" id="CHEBI:30616"/>
        <dbReference type="ChEBI" id="CHEBI:43474"/>
        <dbReference type="ChEBI" id="CHEBI:139126"/>
        <dbReference type="ChEBI" id="CHEBI:139127"/>
        <dbReference type="ChEBI" id="CHEBI:456216"/>
    </reaction>
</comment>
<comment type="pathway">
    <text evidence="1">Protein modification; [NiFe] hydrogenase maturation.</text>
</comment>
<comment type="PTM">
    <text evidence="1">Modified by HypF, which adds a carboxamido group to the thiolate of the C-terminal cysteine, yielding a protein-S-carboxamide. The carboxamido group is then dehydrated by HypE itself to yield a protein-thiocyanate.</text>
</comment>
<comment type="similarity">
    <text evidence="2">Belongs to the HypE family.</text>
</comment>
<comment type="sequence caution" evidence="2">
    <conflict type="erroneous initiation">
        <sequence resource="EMBL-CDS" id="CAA43329"/>
    </conflict>
</comment>